<dbReference type="EMBL" id="CP000447">
    <property type="protein sequence ID" value="ABI70016.1"/>
    <property type="molecule type" value="Genomic_DNA"/>
</dbReference>
<dbReference type="RefSeq" id="WP_011635644.1">
    <property type="nucleotide sequence ID" value="NC_008345.1"/>
</dbReference>
<dbReference type="SMR" id="Q089P9"/>
<dbReference type="STRING" id="318167.Sfri_0153"/>
<dbReference type="GeneID" id="90572202"/>
<dbReference type="KEGG" id="sfr:Sfri_0153"/>
<dbReference type="eggNOG" id="COG0091">
    <property type="taxonomic scope" value="Bacteria"/>
</dbReference>
<dbReference type="HOGENOM" id="CLU_083987_3_3_6"/>
<dbReference type="OrthoDB" id="9805969at2"/>
<dbReference type="Proteomes" id="UP000000684">
    <property type="component" value="Chromosome"/>
</dbReference>
<dbReference type="GO" id="GO:0022625">
    <property type="term" value="C:cytosolic large ribosomal subunit"/>
    <property type="evidence" value="ECO:0007669"/>
    <property type="project" value="TreeGrafter"/>
</dbReference>
<dbReference type="GO" id="GO:0019843">
    <property type="term" value="F:rRNA binding"/>
    <property type="evidence" value="ECO:0007669"/>
    <property type="project" value="UniProtKB-UniRule"/>
</dbReference>
<dbReference type="GO" id="GO:0003735">
    <property type="term" value="F:structural constituent of ribosome"/>
    <property type="evidence" value="ECO:0007669"/>
    <property type="project" value="InterPro"/>
</dbReference>
<dbReference type="GO" id="GO:0006412">
    <property type="term" value="P:translation"/>
    <property type="evidence" value="ECO:0007669"/>
    <property type="project" value="UniProtKB-UniRule"/>
</dbReference>
<dbReference type="CDD" id="cd00336">
    <property type="entry name" value="Ribosomal_L22"/>
    <property type="match status" value="1"/>
</dbReference>
<dbReference type="FunFam" id="3.90.470.10:FF:000001">
    <property type="entry name" value="50S ribosomal protein L22"/>
    <property type="match status" value="1"/>
</dbReference>
<dbReference type="Gene3D" id="3.90.470.10">
    <property type="entry name" value="Ribosomal protein L22/L17"/>
    <property type="match status" value="1"/>
</dbReference>
<dbReference type="HAMAP" id="MF_01331_B">
    <property type="entry name" value="Ribosomal_uL22_B"/>
    <property type="match status" value="1"/>
</dbReference>
<dbReference type="InterPro" id="IPR001063">
    <property type="entry name" value="Ribosomal_uL22"/>
</dbReference>
<dbReference type="InterPro" id="IPR005727">
    <property type="entry name" value="Ribosomal_uL22_bac/chlpt-type"/>
</dbReference>
<dbReference type="InterPro" id="IPR047867">
    <property type="entry name" value="Ribosomal_uL22_bac/org-type"/>
</dbReference>
<dbReference type="InterPro" id="IPR018260">
    <property type="entry name" value="Ribosomal_uL22_CS"/>
</dbReference>
<dbReference type="InterPro" id="IPR036394">
    <property type="entry name" value="Ribosomal_uL22_sf"/>
</dbReference>
<dbReference type="NCBIfam" id="TIGR01044">
    <property type="entry name" value="rplV_bact"/>
    <property type="match status" value="1"/>
</dbReference>
<dbReference type="PANTHER" id="PTHR13501">
    <property type="entry name" value="CHLOROPLAST 50S RIBOSOMAL PROTEIN L22-RELATED"/>
    <property type="match status" value="1"/>
</dbReference>
<dbReference type="PANTHER" id="PTHR13501:SF8">
    <property type="entry name" value="LARGE RIBOSOMAL SUBUNIT PROTEIN UL22M"/>
    <property type="match status" value="1"/>
</dbReference>
<dbReference type="Pfam" id="PF00237">
    <property type="entry name" value="Ribosomal_L22"/>
    <property type="match status" value="1"/>
</dbReference>
<dbReference type="SUPFAM" id="SSF54843">
    <property type="entry name" value="Ribosomal protein L22"/>
    <property type="match status" value="1"/>
</dbReference>
<dbReference type="PROSITE" id="PS00464">
    <property type="entry name" value="RIBOSOMAL_L22"/>
    <property type="match status" value="1"/>
</dbReference>
<feature type="chain" id="PRO_1000052646" description="Large ribosomal subunit protein uL22">
    <location>
        <begin position="1"/>
        <end position="110"/>
    </location>
</feature>
<accession>Q089P9</accession>
<gene>
    <name evidence="1" type="primary">rplV</name>
    <name type="ordered locus">Sfri_0153</name>
</gene>
<name>RL22_SHEFN</name>
<protein>
    <recommendedName>
        <fullName evidence="1">Large ribosomal subunit protein uL22</fullName>
    </recommendedName>
    <alternativeName>
        <fullName evidence="2">50S ribosomal protein L22</fullName>
    </alternativeName>
</protein>
<sequence length="110" mass="12071">MEVLAKHRFARTSAQKARLVADQIRGLPVSKALEILTFSPKKAAVLVKKVLDSAIANAEHNEGADIDELKVGAVFVDEGPTMKRIMPRAKGRADRIMKRTSHITVVVADR</sequence>
<reference key="1">
    <citation type="submission" date="2006-08" db="EMBL/GenBank/DDBJ databases">
        <title>Complete sequence of Shewanella frigidimarina NCIMB 400.</title>
        <authorList>
            <consortium name="US DOE Joint Genome Institute"/>
            <person name="Copeland A."/>
            <person name="Lucas S."/>
            <person name="Lapidus A."/>
            <person name="Barry K."/>
            <person name="Detter J.C."/>
            <person name="Glavina del Rio T."/>
            <person name="Hammon N."/>
            <person name="Israni S."/>
            <person name="Dalin E."/>
            <person name="Tice H."/>
            <person name="Pitluck S."/>
            <person name="Fredrickson J.K."/>
            <person name="Kolker E."/>
            <person name="McCuel L.A."/>
            <person name="DiChristina T."/>
            <person name="Nealson K.H."/>
            <person name="Newman D."/>
            <person name="Tiedje J.M."/>
            <person name="Zhou J."/>
            <person name="Romine M.F."/>
            <person name="Culley D.E."/>
            <person name="Serres M."/>
            <person name="Chertkov O."/>
            <person name="Brettin T."/>
            <person name="Bruce D."/>
            <person name="Han C."/>
            <person name="Tapia R."/>
            <person name="Gilna P."/>
            <person name="Schmutz J."/>
            <person name="Larimer F."/>
            <person name="Land M."/>
            <person name="Hauser L."/>
            <person name="Kyrpides N."/>
            <person name="Mikhailova N."/>
            <person name="Richardson P."/>
        </authorList>
    </citation>
    <scope>NUCLEOTIDE SEQUENCE [LARGE SCALE GENOMIC DNA]</scope>
    <source>
        <strain>NCIMB 400</strain>
    </source>
</reference>
<proteinExistence type="inferred from homology"/>
<keyword id="KW-1185">Reference proteome</keyword>
<keyword id="KW-0687">Ribonucleoprotein</keyword>
<keyword id="KW-0689">Ribosomal protein</keyword>
<keyword id="KW-0694">RNA-binding</keyword>
<keyword id="KW-0699">rRNA-binding</keyword>
<comment type="function">
    <text evidence="1">This protein binds specifically to 23S rRNA; its binding is stimulated by other ribosomal proteins, e.g. L4, L17, and L20. It is important during the early stages of 50S assembly. It makes multiple contacts with different domains of the 23S rRNA in the assembled 50S subunit and ribosome (By similarity).</text>
</comment>
<comment type="function">
    <text evidence="1">The globular domain of the protein is located near the polypeptide exit tunnel on the outside of the subunit, while an extended beta-hairpin is found that lines the wall of the exit tunnel in the center of the 70S ribosome.</text>
</comment>
<comment type="subunit">
    <text evidence="1">Part of the 50S ribosomal subunit.</text>
</comment>
<comment type="similarity">
    <text evidence="1">Belongs to the universal ribosomal protein uL22 family.</text>
</comment>
<evidence type="ECO:0000255" key="1">
    <source>
        <dbReference type="HAMAP-Rule" id="MF_01331"/>
    </source>
</evidence>
<evidence type="ECO:0000305" key="2"/>
<organism>
    <name type="scientific">Shewanella frigidimarina (strain NCIMB 400)</name>
    <dbReference type="NCBI Taxonomy" id="318167"/>
    <lineage>
        <taxon>Bacteria</taxon>
        <taxon>Pseudomonadati</taxon>
        <taxon>Pseudomonadota</taxon>
        <taxon>Gammaproteobacteria</taxon>
        <taxon>Alteromonadales</taxon>
        <taxon>Shewanellaceae</taxon>
        <taxon>Shewanella</taxon>
    </lineage>
</organism>